<gene>
    <name evidence="1" type="primary">nfo</name>
    <name type="ordered locus">SSON_2215</name>
</gene>
<comment type="function">
    <text evidence="1">Endonuclease IV plays a role in DNA repair. It cleaves phosphodiester bonds at apurinic or apyrimidinic (AP) sites, generating a 3'-hydroxyl group and a 5'-terminal sugar phosphate.</text>
</comment>
<comment type="catalytic activity">
    <reaction evidence="1">
        <text>Endonucleolytic cleavage to 5'-phosphooligonucleotide end-products.</text>
        <dbReference type="EC" id="3.1.21.2"/>
    </reaction>
</comment>
<comment type="cofactor">
    <cofactor evidence="1">
        <name>Zn(2+)</name>
        <dbReference type="ChEBI" id="CHEBI:29105"/>
    </cofactor>
    <text evidence="1">Binds 3 Zn(2+) ions.</text>
</comment>
<comment type="similarity">
    <text evidence="1">Belongs to the AP endonuclease 2 family.</text>
</comment>
<protein>
    <recommendedName>
        <fullName evidence="1">Probable endonuclease 4</fullName>
        <ecNumber evidence="1">3.1.21.2</ecNumber>
    </recommendedName>
    <alternativeName>
        <fullName evidence="1">Endodeoxyribonuclease IV</fullName>
    </alternativeName>
    <alternativeName>
        <fullName evidence="1">Endonuclease IV</fullName>
    </alternativeName>
</protein>
<dbReference type="EC" id="3.1.21.2" evidence="1"/>
<dbReference type="EMBL" id="CP000038">
    <property type="protein sequence ID" value="AAZ88865.1"/>
    <property type="molecule type" value="Genomic_DNA"/>
</dbReference>
<dbReference type="RefSeq" id="WP_000873900.1">
    <property type="nucleotide sequence ID" value="NC_007384.1"/>
</dbReference>
<dbReference type="SMR" id="Q3Z047"/>
<dbReference type="KEGG" id="ssn:SSON_2215"/>
<dbReference type="HOGENOM" id="CLU_025885_0_4_6"/>
<dbReference type="Proteomes" id="UP000002529">
    <property type="component" value="Chromosome"/>
</dbReference>
<dbReference type="GO" id="GO:0008833">
    <property type="term" value="F:deoxyribonuclease IV (phage-T4-induced) activity"/>
    <property type="evidence" value="ECO:0007669"/>
    <property type="project" value="UniProtKB-UniRule"/>
</dbReference>
<dbReference type="GO" id="GO:0003677">
    <property type="term" value="F:DNA binding"/>
    <property type="evidence" value="ECO:0007669"/>
    <property type="project" value="InterPro"/>
</dbReference>
<dbReference type="GO" id="GO:0003906">
    <property type="term" value="F:DNA-(apurinic or apyrimidinic site) endonuclease activity"/>
    <property type="evidence" value="ECO:0007669"/>
    <property type="project" value="TreeGrafter"/>
</dbReference>
<dbReference type="GO" id="GO:0008081">
    <property type="term" value="F:phosphoric diester hydrolase activity"/>
    <property type="evidence" value="ECO:0007669"/>
    <property type="project" value="TreeGrafter"/>
</dbReference>
<dbReference type="GO" id="GO:0008270">
    <property type="term" value="F:zinc ion binding"/>
    <property type="evidence" value="ECO:0007669"/>
    <property type="project" value="UniProtKB-UniRule"/>
</dbReference>
<dbReference type="GO" id="GO:0006284">
    <property type="term" value="P:base-excision repair"/>
    <property type="evidence" value="ECO:0007669"/>
    <property type="project" value="TreeGrafter"/>
</dbReference>
<dbReference type="CDD" id="cd00019">
    <property type="entry name" value="AP2Ec"/>
    <property type="match status" value="1"/>
</dbReference>
<dbReference type="FunFam" id="3.20.20.150:FF:000001">
    <property type="entry name" value="Probable endonuclease 4"/>
    <property type="match status" value="1"/>
</dbReference>
<dbReference type="Gene3D" id="3.20.20.150">
    <property type="entry name" value="Divalent-metal-dependent TIM barrel enzymes"/>
    <property type="match status" value="1"/>
</dbReference>
<dbReference type="HAMAP" id="MF_00152">
    <property type="entry name" value="Nfo"/>
    <property type="match status" value="1"/>
</dbReference>
<dbReference type="InterPro" id="IPR001719">
    <property type="entry name" value="AP_endonuc_2"/>
</dbReference>
<dbReference type="InterPro" id="IPR018246">
    <property type="entry name" value="AP_endonuc_F2_Zn_BS"/>
</dbReference>
<dbReference type="InterPro" id="IPR036237">
    <property type="entry name" value="Xyl_isomerase-like_sf"/>
</dbReference>
<dbReference type="InterPro" id="IPR013022">
    <property type="entry name" value="Xyl_isomerase-like_TIM-brl"/>
</dbReference>
<dbReference type="NCBIfam" id="TIGR00587">
    <property type="entry name" value="nfo"/>
    <property type="match status" value="1"/>
</dbReference>
<dbReference type="NCBIfam" id="NF002199">
    <property type="entry name" value="PRK01060.1-4"/>
    <property type="match status" value="1"/>
</dbReference>
<dbReference type="PANTHER" id="PTHR21445:SF0">
    <property type="entry name" value="APURINIC-APYRIMIDINIC ENDONUCLEASE"/>
    <property type="match status" value="1"/>
</dbReference>
<dbReference type="PANTHER" id="PTHR21445">
    <property type="entry name" value="ENDONUCLEASE IV ENDODEOXYRIBONUCLEASE IV"/>
    <property type="match status" value="1"/>
</dbReference>
<dbReference type="Pfam" id="PF01261">
    <property type="entry name" value="AP_endonuc_2"/>
    <property type="match status" value="1"/>
</dbReference>
<dbReference type="SMART" id="SM00518">
    <property type="entry name" value="AP2Ec"/>
    <property type="match status" value="1"/>
</dbReference>
<dbReference type="SUPFAM" id="SSF51658">
    <property type="entry name" value="Xylose isomerase-like"/>
    <property type="match status" value="1"/>
</dbReference>
<dbReference type="PROSITE" id="PS00729">
    <property type="entry name" value="AP_NUCLEASE_F2_1"/>
    <property type="match status" value="1"/>
</dbReference>
<dbReference type="PROSITE" id="PS00730">
    <property type="entry name" value="AP_NUCLEASE_F2_2"/>
    <property type="match status" value="1"/>
</dbReference>
<dbReference type="PROSITE" id="PS00731">
    <property type="entry name" value="AP_NUCLEASE_F2_3"/>
    <property type="match status" value="1"/>
</dbReference>
<dbReference type="PROSITE" id="PS51432">
    <property type="entry name" value="AP_NUCLEASE_F2_4"/>
    <property type="match status" value="1"/>
</dbReference>
<name>END4_SHISS</name>
<organism>
    <name type="scientific">Shigella sonnei (strain Ss046)</name>
    <dbReference type="NCBI Taxonomy" id="300269"/>
    <lineage>
        <taxon>Bacteria</taxon>
        <taxon>Pseudomonadati</taxon>
        <taxon>Pseudomonadota</taxon>
        <taxon>Gammaproteobacteria</taxon>
        <taxon>Enterobacterales</taxon>
        <taxon>Enterobacteriaceae</taxon>
        <taxon>Shigella</taxon>
    </lineage>
</organism>
<accession>Q3Z047</accession>
<keyword id="KW-0227">DNA damage</keyword>
<keyword id="KW-0234">DNA repair</keyword>
<keyword id="KW-0255">Endonuclease</keyword>
<keyword id="KW-0378">Hydrolase</keyword>
<keyword id="KW-0479">Metal-binding</keyword>
<keyword id="KW-0540">Nuclease</keyword>
<keyword id="KW-1185">Reference proteome</keyword>
<keyword id="KW-0862">Zinc</keyword>
<sequence length="285" mass="31580">MKYIGAHVSAAGGLANAAIRAVEIDATAFALFTKNQRQWRAAPLTTQTIDEFKAACEKYHYTSAQILPHDSYLINLGHPVTEALEKSRDAFIDEMQRCEQLGLSLLNFHPGSHLMQISEEDCLARIAESINIALDKTQGVTAVIENTAGQGSNLGFKFEHLAAIIDGVEDKFRVGVCIDTCHAFAAGYDLRTPAECEKTFADFARIVGFKYLRGMHLNDAKSTFGSRVDRHHSLGEGNIGHDAFRWIMQDDRFDGIPLILETINPDIWAEEIAWLKAQQTEKAVA</sequence>
<evidence type="ECO:0000255" key="1">
    <source>
        <dbReference type="HAMAP-Rule" id="MF_00152"/>
    </source>
</evidence>
<proteinExistence type="inferred from homology"/>
<feature type="chain" id="PRO_1000011335" description="Probable endonuclease 4">
    <location>
        <begin position="1"/>
        <end position="285"/>
    </location>
</feature>
<feature type="binding site" evidence="1">
    <location>
        <position position="69"/>
    </location>
    <ligand>
        <name>Zn(2+)</name>
        <dbReference type="ChEBI" id="CHEBI:29105"/>
        <label>1</label>
    </ligand>
</feature>
<feature type="binding site" evidence="1">
    <location>
        <position position="109"/>
    </location>
    <ligand>
        <name>Zn(2+)</name>
        <dbReference type="ChEBI" id="CHEBI:29105"/>
        <label>1</label>
    </ligand>
</feature>
<feature type="binding site" evidence="1">
    <location>
        <position position="145"/>
    </location>
    <ligand>
        <name>Zn(2+)</name>
        <dbReference type="ChEBI" id="CHEBI:29105"/>
        <label>1</label>
    </ligand>
</feature>
<feature type="binding site" evidence="1">
    <location>
        <position position="145"/>
    </location>
    <ligand>
        <name>Zn(2+)</name>
        <dbReference type="ChEBI" id="CHEBI:29105"/>
        <label>2</label>
    </ligand>
</feature>
<feature type="binding site" evidence="1">
    <location>
        <position position="179"/>
    </location>
    <ligand>
        <name>Zn(2+)</name>
        <dbReference type="ChEBI" id="CHEBI:29105"/>
        <label>2</label>
    </ligand>
</feature>
<feature type="binding site" evidence="1">
    <location>
        <position position="182"/>
    </location>
    <ligand>
        <name>Zn(2+)</name>
        <dbReference type="ChEBI" id="CHEBI:29105"/>
        <label>3</label>
    </ligand>
</feature>
<feature type="binding site" evidence="1">
    <location>
        <position position="216"/>
    </location>
    <ligand>
        <name>Zn(2+)</name>
        <dbReference type="ChEBI" id="CHEBI:29105"/>
        <label>2</label>
    </ligand>
</feature>
<feature type="binding site" evidence="1">
    <location>
        <position position="229"/>
    </location>
    <ligand>
        <name>Zn(2+)</name>
        <dbReference type="ChEBI" id="CHEBI:29105"/>
        <label>3</label>
    </ligand>
</feature>
<feature type="binding site" evidence="1">
    <location>
        <position position="231"/>
    </location>
    <ligand>
        <name>Zn(2+)</name>
        <dbReference type="ChEBI" id="CHEBI:29105"/>
        <label>3</label>
    </ligand>
</feature>
<feature type="binding site" evidence="1">
    <location>
        <position position="261"/>
    </location>
    <ligand>
        <name>Zn(2+)</name>
        <dbReference type="ChEBI" id="CHEBI:29105"/>
        <label>2</label>
    </ligand>
</feature>
<reference key="1">
    <citation type="journal article" date="2005" name="Nucleic Acids Res.">
        <title>Genome dynamics and diversity of Shigella species, the etiologic agents of bacillary dysentery.</title>
        <authorList>
            <person name="Yang F."/>
            <person name="Yang J."/>
            <person name="Zhang X."/>
            <person name="Chen L."/>
            <person name="Jiang Y."/>
            <person name="Yan Y."/>
            <person name="Tang X."/>
            <person name="Wang J."/>
            <person name="Xiong Z."/>
            <person name="Dong J."/>
            <person name="Xue Y."/>
            <person name="Zhu Y."/>
            <person name="Xu X."/>
            <person name="Sun L."/>
            <person name="Chen S."/>
            <person name="Nie H."/>
            <person name="Peng J."/>
            <person name="Xu J."/>
            <person name="Wang Y."/>
            <person name="Yuan Z."/>
            <person name="Wen Y."/>
            <person name="Yao Z."/>
            <person name="Shen Y."/>
            <person name="Qiang B."/>
            <person name="Hou Y."/>
            <person name="Yu J."/>
            <person name="Jin Q."/>
        </authorList>
    </citation>
    <scope>NUCLEOTIDE SEQUENCE [LARGE SCALE GENOMIC DNA]</scope>
    <source>
        <strain>Ss046</strain>
    </source>
</reference>